<gene>
    <name type="primary">TUFB</name>
</gene>
<dbReference type="EMBL" id="D11470">
    <property type="protein sequence ID" value="BAA02028.1"/>
    <property type="molecule type" value="Genomic_DNA"/>
</dbReference>
<dbReference type="EMBL" id="D11376">
    <property type="protein sequence ID" value="BAA01975.1"/>
    <property type="molecule type" value="mRNA"/>
</dbReference>
<dbReference type="PIR" id="S36184">
    <property type="entry name" value="S36184"/>
</dbReference>
<dbReference type="RefSeq" id="XP_009772722.1">
    <property type="nucleotide sequence ID" value="XM_009774420.1"/>
</dbReference>
<dbReference type="SMR" id="Q43364"/>
<dbReference type="STRING" id="4096.Q43364"/>
<dbReference type="eggNOG" id="KOG0460">
    <property type="taxonomic scope" value="Eukaryota"/>
</dbReference>
<dbReference type="Proteomes" id="UP000189701">
    <property type="component" value="Unplaced"/>
</dbReference>
<dbReference type="GO" id="GO:0009507">
    <property type="term" value="C:chloroplast"/>
    <property type="evidence" value="ECO:0007669"/>
    <property type="project" value="UniProtKB-SubCell"/>
</dbReference>
<dbReference type="GO" id="GO:0005739">
    <property type="term" value="C:mitochondrion"/>
    <property type="evidence" value="ECO:0007669"/>
    <property type="project" value="TreeGrafter"/>
</dbReference>
<dbReference type="GO" id="GO:0005525">
    <property type="term" value="F:GTP binding"/>
    <property type="evidence" value="ECO:0007669"/>
    <property type="project" value="UniProtKB-KW"/>
</dbReference>
<dbReference type="GO" id="GO:0003924">
    <property type="term" value="F:GTPase activity"/>
    <property type="evidence" value="ECO:0007669"/>
    <property type="project" value="InterPro"/>
</dbReference>
<dbReference type="GO" id="GO:0003746">
    <property type="term" value="F:translation elongation factor activity"/>
    <property type="evidence" value="ECO:0007669"/>
    <property type="project" value="UniProtKB-KW"/>
</dbReference>
<dbReference type="GO" id="GO:0070125">
    <property type="term" value="P:mitochondrial translational elongation"/>
    <property type="evidence" value="ECO:0007669"/>
    <property type="project" value="TreeGrafter"/>
</dbReference>
<dbReference type="CDD" id="cd01884">
    <property type="entry name" value="EF_Tu"/>
    <property type="match status" value="1"/>
</dbReference>
<dbReference type="CDD" id="cd03697">
    <property type="entry name" value="EFTU_II"/>
    <property type="match status" value="1"/>
</dbReference>
<dbReference type="CDD" id="cd03707">
    <property type="entry name" value="EFTU_III"/>
    <property type="match status" value="1"/>
</dbReference>
<dbReference type="FunFam" id="2.40.30.10:FF:000001">
    <property type="entry name" value="Elongation factor Tu"/>
    <property type="match status" value="1"/>
</dbReference>
<dbReference type="FunFam" id="2.40.30.10:FF:000046">
    <property type="entry name" value="Elongation factor Tu"/>
    <property type="match status" value="1"/>
</dbReference>
<dbReference type="FunFam" id="3.40.50.300:FF:000003">
    <property type="entry name" value="Elongation factor Tu"/>
    <property type="match status" value="1"/>
</dbReference>
<dbReference type="Gene3D" id="3.40.50.300">
    <property type="entry name" value="P-loop containing nucleotide triphosphate hydrolases"/>
    <property type="match status" value="1"/>
</dbReference>
<dbReference type="Gene3D" id="2.40.30.10">
    <property type="entry name" value="Translation factors"/>
    <property type="match status" value="2"/>
</dbReference>
<dbReference type="HAMAP" id="MF_00118_B">
    <property type="entry name" value="EF_Tu_B"/>
    <property type="match status" value="1"/>
</dbReference>
<dbReference type="InterPro" id="IPR041709">
    <property type="entry name" value="EF-Tu_GTP-bd"/>
</dbReference>
<dbReference type="InterPro" id="IPR050055">
    <property type="entry name" value="EF-Tu_GTPase"/>
</dbReference>
<dbReference type="InterPro" id="IPR004161">
    <property type="entry name" value="EFTu-like_2"/>
</dbReference>
<dbReference type="InterPro" id="IPR033720">
    <property type="entry name" value="EFTU_2"/>
</dbReference>
<dbReference type="InterPro" id="IPR031157">
    <property type="entry name" value="G_TR_CS"/>
</dbReference>
<dbReference type="InterPro" id="IPR027417">
    <property type="entry name" value="P-loop_NTPase"/>
</dbReference>
<dbReference type="InterPro" id="IPR005225">
    <property type="entry name" value="Small_GTP-bd"/>
</dbReference>
<dbReference type="InterPro" id="IPR000795">
    <property type="entry name" value="T_Tr_GTP-bd_dom"/>
</dbReference>
<dbReference type="InterPro" id="IPR009000">
    <property type="entry name" value="Transl_B-barrel_sf"/>
</dbReference>
<dbReference type="InterPro" id="IPR009001">
    <property type="entry name" value="Transl_elong_EF1A/Init_IF2_C"/>
</dbReference>
<dbReference type="InterPro" id="IPR004541">
    <property type="entry name" value="Transl_elong_EFTu/EF1A_bac/org"/>
</dbReference>
<dbReference type="InterPro" id="IPR004160">
    <property type="entry name" value="Transl_elong_EFTu/EF1A_C"/>
</dbReference>
<dbReference type="NCBIfam" id="TIGR00485">
    <property type="entry name" value="EF-Tu"/>
    <property type="match status" value="1"/>
</dbReference>
<dbReference type="NCBIfam" id="NF000766">
    <property type="entry name" value="PRK00049.1"/>
    <property type="match status" value="1"/>
</dbReference>
<dbReference type="NCBIfam" id="NF009372">
    <property type="entry name" value="PRK12735.1"/>
    <property type="match status" value="1"/>
</dbReference>
<dbReference type="NCBIfam" id="NF009373">
    <property type="entry name" value="PRK12736.1"/>
    <property type="match status" value="1"/>
</dbReference>
<dbReference type="NCBIfam" id="TIGR00231">
    <property type="entry name" value="small_GTP"/>
    <property type="match status" value="1"/>
</dbReference>
<dbReference type="PANTHER" id="PTHR43721:SF5">
    <property type="entry name" value="ELONGATION FACTOR TU, CHLOROPLASTIC"/>
    <property type="match status" value="1"/>
</dbReference>
<dbReference type="PANTHER" id="PTHR43721">
    <property type="entry name" value="ELONGATION FACTOR TU-RELATED"/>
    <property type="match status" value="1"/>
</dbReference>
<dbReference type="Pfam" id="PF00009">
    <property type="entry name" value="GTP_EFTU"/>
    <property type="match status" value="1"/>
</dbReference>
<dbReference type="Pfam" id="PF03144">
    <property type="entry name" value="GTP_EFTU_D2"/>
    <property type="match status" value="1"/>
</dbReference>
<dbReference type="Pfam" id="PF03143">
    <property type="entry name" value="GTP_EFTU_D3"/>
    <property type="match status" value="1"/>
</dbReference>
<dbReference type="PRINTS" id="PR00315">
    <property type="entry name" value="ELONGATNFCT"/>
</dbReference>
<dbReference type="SUPFAM" id="SSF50465">
    <property type="entry name" value="EF-Tu/eEF-1alpha/eIF2-gamma C-terminal domain"/>
    <property type="match status" value="1"/>
</dbReference>
<dbReference type="SUPFAM" id="SSF52540">
    <property type="entry name" value="P-loop containing nucleoside triphosphate hydrolases"/>
    <property type="match status" value="1"/>
</dbReference>
<dbReference type="SUPFAM" id="SSF50447">
    <property type="entry name" value="Translation proteins"/>
    <property type="match status" value="1"/>
</dbReference>
<dbReference type="PROSITE" id="PS00301">
    <property type="entry name" value="G_TR_1"/>
    <property type="match status" value="1"/>
</dbReference>
<dbReference type="PROSITE" id="PS51722">
    <property type="entry name" value="G_TR_2"/>
    <property type="match status" value="1"/>
</dbReference>
<evidence type="ECO:0000250" key="1"/>
<evidence type="ECO:0000255" key="2"/>
<evidence type="ECO:0000305" key="3"/>
<protein>
    <recommendedName>
        <fullName>Elongation factor TuB, chloroplastic</fullName>
        <shortName>EF-TuB</shortName>
    </recommendedName>
</protein>
<organism>
    <name type="scientific">Nicotiana sylvestris</name>
    <name type="common">Wood tobacco</name>
    <name type="synonym">South American tobacco</name>
    <dbReference type="NCBI Taxonomy" id="4096"/>
    <lineage>
        <taxon>Eukaryota</taxon>
        <taxon>Viridiplantae</taxon>
        <taxon>Streptophyta</taxon>
        <taxon>Embryophyta</taxon>
        <taxon>Tracheophyta</taxon>
        <taxon>Spermatophyta</taxon>
        <taxon>Magnoliopsida</taxon>
        <taxon>eudicotyledons</taxon>
        <taxon>Gunneridae</taxon>
        <taxon>Pentapetalae</taxon>
        <taxon>asterids</taxon>
        <taxon>lamiids</taxon>
        <taxon>Solanales</taxon>
        <taxon>Solanaceae</taxon>
        <taxon>Nicotianoideae</taxon>
        <taxon>Nicotianeae</taxon>
        <taxon>Nicotiana</taxon>
    </lineage>
</organism>
<comment type="function">
    <text>This protein promotes the GTP-dependent binding of aminoacyl-tRNA to the A-site of ribosomes during protein biosynthesis.</text>
</comment>
<comment type="subcellular location">
    <subcellularLocation>
        <location>Plastid</location>
        <location>Chloroplast</location>
    </subcellularLocation>
</comment>
<comment type="similarity">
    <text evidence="3">Belongs to the TRAFAC class translation factor GTPase superfamily. Classic translation factor GTPase family. EF-Tu/EF-1A subfamily.</text>
</comment>
<feature type="transit peptide" description="Chloroplast" evidence="2">
    <location>
        <begin position="1"/>
        <end position="76"/>
    </location>
</feature>
<feature type="chain" id="PRO_0000007456" description="Elongation factor TuB, chloroplastic">
    <location>
        <begin position="77"/>
        <end position="485"/>
    </location>
</feature>
<feature type="domain" description="tr-type G">
    <location>
        <begin position="86"/>
        <end position="290"/>
    </location>
</feature>
<feature type="region of interest" description="G1" evidence="1">
    <location>
        <begin position="95"/>
        <end position="102"/>
    </location>
</feature>
<feature type="region of interest" description="G2" evidence="1">
    <location>
        <begin position="136"/>
        <end position="140"/>
    </location>
</feature>
<feature type="region of interest" description="G3" evidence="1">
    <location>
        <begin position="157"/>
        <end position="160"/>
    </location>
</feature>
<feature type="region of interest" description="G4" evidence="1">
    <location>
        <begin position="212"/>
        <end position="215"/>
    </location>
</feature>
<feature type="region of interest" description="G5" evidence="1">
    <location>
        <begin position="250"/>
        <end position="252"/>
    </location>
</feature>
<feature type="binding site" evidence="1">
    <location>
        <begin position="95"/>
        <end position="102"/>
    </location>
    <ligand>
        <name>GTP</name>
        <dbReference type="ChEBI" id="CHEBI:37565"/>
    </ligand>
</feature>
<feature type="binding site" evidence="1">
    <location>
        <begin position="157"/>
        <end position="161"/>
    </location>
    <ligand>
        <name>GTP</name>
        <dbReference type="ChEBI" id="CHEBI:37565"/>
    </ligand>
</feature>
<feature type="binding site" evidence="1">
    <location>
        <begin position="212"/>
        <end position="215"/>
    </location>
    <ligand>
        <name>GTP</name>
        <dbReference type="ChEBI" id="CHEBI:37565"/>
    </ligand>
</feature>
<reference key="1">
    <citation type="journal article" date="1994" name="Curr. Genet.">
        <title>Structure and differential expression of two distinct genes encoding the chloroplast elongation factor Tu in tobacco.</title>
        <authorList>
            <person name="Sugita M."/>
            <person name="Murayama Y."/>
            <person name="Sugiura M."/>
        </authorList>
    </citation>
    <scope>NUCLEOTIDE SEQUENCE [GENOMIC DNA]</scope>
</reference>
<reference key="2">
    <citation type="journal article" date="1993" name="Plant Mol. Biol.">
        <title>Purification of chloroplast elongation factor Tu and cDNA analysis in tobacco: the existence of two chloroplast elongation factor Tu species.</title>
        <authorList>
            <person name="Murayama Y."/>
            <person name="Matsubayashi T."/>
            <person name="Sugita M."/>
            <person name="Sugiura M."/>
        </authorList>
    </citation>
    <scope>NUCLEOTIDE SEQUENCE [MRNA] OF 61-485</scope>
    <source>
        <tissue>Leaf</tissue>
    </source>
</reference>
<proteinExistence type="evidence at transcript level"/>
<sequence>MASISAASATATASTKLAYPYSPSSSSSSSNTAAVFPSNSSKLILSSSFTPTPSTLFLHSPTTTPSTTHPRRFTVRAARGKFERKKPHVNIGTIGHVDHGKTTLTAALTMALASMGNSAPKKYDEIDAAPEERARGITINTATVEYETENRHYAHVDCPGHADYVKNMITGAAQMDGAILVVSGADGPMPQTKEHILLAKQVGVPNMVVFLNKQDQVDDEELLELVELEVRELLSSYEFPGDEIPIISGSALLALEALMANPSIKRGENQWVDKIYQLMDNVDEYIPIPQRQTELPFLMAIEDVFSITGRGTVATGRVERGTVKVGEIVDIVGLKDTRNTTVTGVEMFQKILDEAMAGDNVGLLLRGIQKIDIQRGMVLAKPGTITPHTKFEALVYVLKKEEGGRHSPFFAGYRPQFYMRTTDVTGKVTVIMSDKGEESKMVMPGDRVNMVVELIMPVACEQGMRFAIREGGKTVGAGVIQKILE</sequence>
<name>EFTUB_NICSY</name>
<keyword id="KW-0150">Chloroplast</keyword>
<keyword id="KW-0251">Elongation factor</keyword>
<keyword id="KW-0342">GTP-binding</keyword>
<keyword id="KW-0547">Nucleotide-binding</keyword>
<keyword id="KW-0934">Plastid</keyword>
<keyword id="KW-0648">Protein biosynthesis</keyword>
<keyword id="KW-1185">Reference proteome</keyword>
<keyword id="KW-0809">Transit peptide</keyword>
<accession>Q43364</accession>
<accession>Q7DNA4</accession>